<name>LEUC_ECO8A</name>
<sequence>MAKTLYEKLFDAHVVYEAENETPLLYIDRHLVHEVTSPQAFDGLRAHGRPVRQPGKTFATMDHNVSTQTKDINACGEMARIQMQELIKNCKEFGVELYDLNHPYQGIVHVMGPEQGVTLPGMTIVCGDSHTATHGAFGALAFGIGTSEVEHVLATQTLKQGRAKTMKIEVQGKAAPGITAKDIVLAIIGKTGSAGGTGHVVEFCGEAIRDLSMEGRMTLCNMAIEMGAKAGLVAPDETTFNYVKGRLHAPKGKDFDDAVAYWKTLQTDEGATFDTVVTLQAEEISPQVTWGTNPGQVISVNDNIPDPASFADPVERASAEKALAYMGLKPGIPLTEVAIDKVFIGSCTNSRIEDLRAAAEIAKGRKVAPGVQALVVPGSGPVKAQAEAEGLDKIFIEAGFEWRLPGCSMCLAMNNDRLNPGERCASTSNRNFEGRQGRGGRTHLVSPAMAAAAAVTGHFADIRNIK</sequence>
<feature type="chain" id="PRO_1000135682" description="3-isopropylmalate dehydratase large subunit">
    <location>
        <begin position="1"/>
        <end position="466"/>
    </location>
</feature>
<feature type="binding site" evidence="1">
    <location>
        <position position="347"/>
    </location>
    <ligand>
        <name>[4Fe-4S] cluster</name>
        <dbReference type="ChEBI" id="CHEBI:49883"/>
    </ligand>
</feature>
<feature type="binding site" evidence="1">
    <location>
        <position position="407"/>
    </location>
    <ligand>
        <name>[4Fe-4S] cluster</name>
        <dbReference type="ChEBI" id="CHEBI:49883"/>
    </ligand>
</feature>
<feature type="binding site" evidence="1">
    <location>
        <position position="410"/>
    </location>
    <ligand>
        <name>[4Fe-4S] cluster</name>
        <dbReference type="ChEBI" id="CHEBI:49883"/>
    </ligand>
</feature>
<proteinExistence type="inferred from homology"/>
<comment type="function">
    <text evidence="1">Catalyzes the isomerization between 2-isopropylmalate and 3-isopropylmalate, via the formation of 2-isopropylmaleate.</text>
</comment>
<comment type="catalytic activity">
    <reaction evidence="1">
        <text>(2R,3S)-3-isopropylmalate = (2S)-2-isopropylmalate</text>
        <dbReference type="Rhea" id="RHEA:32287"/>
        <dbReference type="ChEBI" id="CHEBI:1178"/>
        <dbReference type="ChEBI" id="CHEBI:35121"/>
        <dbReference type="EC" id="4.2.1.33"/>
    </reaction>
</comment>
<comment type="cofactor">
    <cofactor evidence="1">
        <name>[4Fe-4S] cluster</name>
        <dbReference type="ChEBI" id="CHEBI:49883"/>
    </cofactor>
    <text evidence="1">Binds 1 [4Fe-4S] cluster per subunit.</text>
</comment>
<comment type="pathway">
    <text evidence="1">Amino-acid biosynthesis; L-leucine biosynthesis; L-leucine from 3-methyl-2-oxobutanoate: step 2/4.</text>
</comment>
<comment type="subunit">
    <text evidence="1">Heterodimer of LeuC and LeuD.</text>
</comment>
<comment type="similarity">
    <text evidence="1">Belongs to the aconitase/IPM isomerase family. LeuC type 1 subfamily.</text>
</comment>
<protein>
    <recommendedName>
        <fullName evidence="1">3-isopropylmalate dehydratase large subunit</fullName>
        <ecNumber evidence="1">4.2.1.33</ecNumber>
    </recommendedName>
    <alternativeName>
        <fullName evidence="1">Alpha-IPM isomerase</fullName>
        <shortName evidence="1">IPMI</shortName>
    </alternativeName>
    <alternativeName>
        <fullName evidence="1">Isopropylmalate isomerase</fullName>
    </alternativeName>
</protein>
<accession>B7M117</accession>
<organism>
    <name type="scientific">Escherichia coli O8 (strain IAI1)</name>
    <dbReference type="NCBI Taxonomy" id="585034"/>
    <lineage>
        <taxon>Bacteria</taxon>
        <taxon>Pseudomonadati</taxon>
        <taxon>Pseudomonadota</taxon>
        <taxon>Gammaproteobacteria</taxon>
        <taxon>Enterobacterales</taxon>
        <taxon>Enterobacteriaceae</taxon>
        <taxon>Escherichia</taxon>
    </lineage>
</organism>
<reference key="1">
    <citation type="journal article" date="2009" name="PLoS Genet.">
        <title>Organised genome dynamics in the Escherichia coli species results in highly diverse adaptive paths.</title>
        <authorList>
            <person name="Touchon M."/>
            <person name="Hoede C."/>
            <person name="Tenaillon O."/>
            <person name="Barbe V."/>
            <person name="Baeriswyl S."/>
            <person name="Bidet P."/>
            <person name="Bingen E."/>
            <person name="Bonacorsi S."/>
            <person name="Bouchier C."/>
            <person name="Bouvet O."/>
            <person name="Calteau A."/>
            <person name="Chiapello H."/>
            <person name="Clermont O."/>
            <person name="Cruveiller S."/>
            <person name="Danchin A."/>
            <person name="Diard M."/>
            <person name="Dossat C."/>
            <person name="Karoui M.E."/>
            <person name="Frapy E."/>
            <person name="Garry L."/>
            <person name="Ghigo J.M."/>
            <person name="Gilles A.M."/>
            <person name="Johnson J."/>
            <person name="Le Bouguenec C."/>
            <person name="Lescat M."/>
            <person name="Mangenot S."/>
            <person name="Martinez-Jehanne V."/>
            <person name="Matic I."/>
            <person name="Nassif X."/>
            <person name="Oztas S."/>
            <person name="Petit M.A."/>
            <person name="Pichon C."/>
            <person name="Rouy Z."/>
            <person name="Ruf C.S."/>
            <person name="Schneider D."/>
            <person name="Tourret J."/>
            <person name="Vacherie B."/>
            <person name="Vallenet D."/>
            <person name="Medigue C."/>
            <person name="Rocha E.P.C."/>
            <person name="Denamur E."/>
        </authorList>
    </citation>
    <scope>NUCLEOTIDE SEQUENCE [LARGE SCALE GENOMIC DNA]</scope>
    <source>
        <strain>IAI1</strain>
    </source>
</reference>
<dbReference type="EC" id="4.2.1.33" evidence="1"/>
<dbReference type="EMBL" id="CU928160">
    <property type="protein sequence ID" value="CAQ96963.1"/>
    <property type="molecule type" value="Genomic_DNA"/>
</dbReference>
<dbReference type="RefSeq" id="WP_001140652.1">
    <property type="nucleotide sequence ID" value="NC_011741.1"/>
</dbReference>
<dbReference type="SMR" id="B7M117"/>
<dbReference type="GeneID" id="75202111"/>
<dbReference type="KEGG" id="ecr:ECIAI1_0073"/>
<dbReference type="HOGENOM" id="CLU_006714_3_4_6"/>
<dbReference type="UniPathway" id="UPA00048">
    <property type="reaction ID" value="UER00071"/>
</dbReference>
<dbReference type="GO" id="GO:0003861">
    <property type="term" value="F:3-isopropylmalate dehydratase activity"/>
    <property type="evidence" value="ECO:0007669"/>
    <property type="project" value="UniProtKB-UniRule"/>
</dbReference>
<dbReference type="GO" id="GO:0051539">
    <property type="term" value="F:4 iron, 4 sulfur cluster binding"/>
    <property type="evidence" value="ECO:0007669"/>
    <property type="project" value="UniProtKB-KW"/>
</dbReference>
<dbReference type="GO" id="GO:0046872">
    <property type="term" value="F:metal ion binding"/>
    <property type="evidence" value="ECO:0007669"/>
    <property type="project" value="UniProtKB-KW"/>
</dbReference>
<dbReference type="GO" id="GO:0009098">
    <property type="term" value="P:L-leucine biosynthetic process"/>
    <property type="evidence" value="ECO:0007669"/>
    <property type="project" value="UniProtKB-UniRule"/>
</dbReference>
<dbReference type="CDD" id="cd01583">
    <property type="entry name" value="IPMI"/>
    <property type="match status" value="1"/>
</dbReference>
<dbReference type="FunFam" id="3.30.499.10:FF:000006">
    <property type="entry name" value="3-isopropylmalate dehydratase large subunit"/>
    <property type="match status" value="1"/>
</dbReference>
<dbReference type="FunFam" id="3.30.499.10:FF:000007">
    <property type="entry name" value="3-isopropylmalate dehydratase large subunit"/>
    <property type="match status" value="1"/>
</dbReference>
<dbReference type="Gene3D" id="3.30.499.10">
    <property type="entry name" value="Aconitase, domain 3"/>
    <property type="match status" value="2"/>
</dbReference>
<dbReference type="HAMAP" id="MF_01026">
    <property type="entry name" value="LeuC_type1"/>
    <property type="match status" value="1"/>
</dbReference>
<dbReference type="InterPro" id="IPR004430">
    <property type="entry name" value="3-IsopropMal_deHydase_lsu"/>
</dbReference>
<dbReference type="InterPro" id="IPR015931">
    <property type="entry name" value="Acnase/IPM_dHydase_lsu_aba_1/3"/>
</dbReference>
<dbReference type="InterPro" id="IPR001030">
    <property type="entry name" value="Acoase/IPM_deHydtase_lsu_aba"/>
</dbReference>
<dbReference type="InterPro" id="IPR018136">
    <property type="entry name" value="Aconitase_4Fe-4S_BS"/>
</dbReference>
<dbReference type="InterPro" id="IPR036008">
    <property type="entry name" value="Aconitase_4Fe-4S_dom"/>
</dbReference>
<dbReference type="InterPro" id="IPR050067">
    <property type="entry name" value="IPM_dehydratase_rel_enz"/>
</dbReference>
<dbReference type="InterPro" id="IPR033941">
    <property type="entry name" value="IPMI_cat"/>
</dbReference>
<dbReference type="NCBIfam" id="TIGR00170">
    <property type="entry name" value="leuC"/>
    <property type="match status" value="1"/>
</dbReference>
<dbReference type="NCBIfam" id="NF004016">
    <property type="entry name" value="PRK05478.1"/>
    <property type="match status" value="1"/>
</dbReference>
<dbReference type="NCBIfam" id="NF009116">
    <property type="entry name" value="PRK12466.1"/>
    <property type="match status" value="1"/>
</dbReference>
<dbReference type="PANTHER" id="PTHR43822:SF9">
    <property type="entry name" value="3-ISOPROPYLMALATE DEHYDRATASE"/>
    <property type="match status" value="1"/>
</dbReference>
<dbReference type="PANTHER" id="PTHR43822">
    <property type="entry name" value="HOMOACONITASE, MITOCHONDRIAL-RELATED"/>
    <property type="match status" value="1"/>
</dbReference>
<dbReference type="Pfam" id="PF00330">
    <property type="entry name" value="Aconitase"/>
    <property type="match status" value="1"/>
</dbReference>
<dbReference type="PRINTS" id="PR00415">
    <property type="entry name" value="ACONITASE"/>
</dbReference>
<dbReference type="SUPFAM" id="SSF53732">
    <property type="entry name" value="Aconitase iron-sulfur domain"/>
    <property type="match status" value="1"/>
</dbReference>
<dbReference type="PROSITE" id="PS00450">
    <property type="entry name" value="ACONITASE_1"/>
    <property type="match status" value="1"/>
</dbReference>
<dbReference type="PROSITE" id="PS01244">
    <property type="entry name" value="ACONITASE_2"/>
    <property type="match status" value="1"/>
</dbReference>
<evidence type="ECO:0000255" key="1">
    <source>
        <dbReference type="HAMAP-Rule" id="MF_01026"/>
    </source>
</evidence>
<keyword id="KW-0004">4Fe-4S</keyword>
<keyword id="KW-0028">Amino-acid biosynthesis</keyword>
<keyword id="KW-0100">Branched-chain amino acid biosynthesis</keyword>
<keyword id="KW-0408">Iron</keyword>
<keyword id="KW-0411">Iron-sulfur</keyword>
<keyword id="KW-0432">Leucine biosynthesis</keyword>
<keyword id="KW-0456">Lyase</keyword>
<keyword id="KW-0479">Metal-binding</keyword>
<gene>
    <name evidence="1" type="primary">leuC</name>
    <name type="ordered locus">ECIAI1_0073</name>
</gene>